<accession>A0RRI0</accession>
<protein>
    <recommendedName>
        <fullName evidence="1">Trigger factor</fullName>
        <shortName evidence="1">TF</shortName>
        <ecNumber evidence="1">5.2.1.8</ecNumber>
    </recommendedName>
    <alternativeName>
        <fullName evidence="1">PPIase</fullName>
    </alternativeName>
</protein>
<feature type="chain" id="PRO_1000022662" description="Trigger factor">
    <location>
        <begin position="1"/>
        <end position="435"/>
    </location>
</feature>
<feature type="domain" description="PPIase FKBP-type" evidence="1">
    <location>
        <begin position="164"/>
        <end position="249"/>
    </location>
</feature>
<organism>
    <name type="scientific">Campylobacter fetus subsp. fetus (strain 82-40)</name>
    <dbReference type="NCBI Taxonomy" id="360106"/>
    <lineage>
        <taxon>Bacteria</taxon>
        <taxon>Pseudomonadati</taxon>
        <taxon>Campylobacterota</taxon>
        <taxon>Epsilonproteobacteria</taxon>
        <taxon>Campylobacterales</taxon>
        <taxon>Campylobacteraceae</taxon>
        <taxon>Campylobacter</taxon>
    </lineage>
</organism>
<keyword id="KW-0131">Cell cycle</keyword>
<keyword id="KW-0132">Cell division</keyword>
<keyword id="KW-0143">Chaperone</keyword>
<keyword id="KW-0963">Cytoplasm</keyword>
<keyword id="KW-0413">Isomerase</keyword>
<keyword id="KW-0697">Rotamase</keyword>
<dbReference type="EC" id="5.2.1.8" evidence="1"/>
<dbReference type="EMBL" id="CP000487">
    <property type="protein sequence ID" value="ABK81957.1"/>
    <property type="molecule type" value="Genomic_DNA"/>
</dbReference>
<dbReference type="RefSeq" id="WP_002850770.1">
    <property type="nucleotide sequence ID" value="NC_008599.1"/>
</dbReference>
<dbReference type="SMR" id="A0RRI0"/>
<dbReference type="GeneID" id="61065506"/>
<dbReference type="KEGG" id="cff:CFF8240_1693"/>
<dbReference type="eggNOG" id="COG0544">
    <property type="taxonomic scope" value="Bacteria"/>
</dbReference>
<dbReference type="HOGENOM" id="CLU_033058_2_2_7"/>
<dbReference type="Proteomes" id="UP000000760">
    <property type="component" value="Chromosome"/>
</dbReference>
<dbReference type="GO" id="GO:0005737">
    <property type="term" value="C:cytoplasm"/>
    <property type="evidence" value="ECO:0007669"/>
    <property type="project" value="UniProtKB-SubCell"/>
</dbReference>
<dbReference type="GO" id="GO:0003755">
    <property type="term" value="F:peptidyl-prolyl cis-trans isomerase activity"/>
    <property type="evidence" value="ECO:0007669"/>
    <property type="project" value="UniProtKB-UniRule"/>
</dbReference>
<dbReference type="GO" id="GO:0044183">
    <property type="term" value="F:protein folding chaperone"/>
    <property type="evidence" value="ECO:0007669"/>
    <property type="project" value="TreeGrafter"/>
</dbReference>
<dbReference type="GO" id="GO:0043022">
    <property type="term" value="F:ribosome binding"/>
    <property type="evidence" value="ECO:0007669"/>
    <property type="project" value="TreeGrafter"/>
</dbReference>
<dbReference type="GO" id="GO:0051083">
    <property type="term" value="P:'de novo' cotranslational protein folding"/>
    <property type="evidence" value="ECO:0007669"/>
    <property type="project" value="TreeGrafter"/>
</dbReference>
<dbReference type="GO" id="GO:0051301">
    <property type="term" value="P:cell division"/>
    <property type="evidence" value="ECO:0007669"/>
    <property type="project" value="UniProtKB-KW"/>
</dbReference>
<dbReference type="GO" id="GO:0061077">
    <property type="term" value="P:chaperone-mediated protein folding"/>
    <property type="evidence" value="ECO:0007669"/>
    <property type="project" value="TreeGrafter"/>
</dbReference>
<dbReference type="GO" id="GO:0015031">
    <property type="term" value="P:protein transport"/>
    <property type="evidence" value="ECO:0007669"/>
    <property type="project" value="UniProtKB-UniRule"/>
</dbReference>
<dbReference type="GO" id="GO:0043335">
    <property type="term" value="P:protein unfolding"/>
    <property type="evidence" value="ECO:0007669"/>
    <property type="project" value="TreeGrafter"/>
</dbReference>
<dbReference type="FunFam" id="3.10.50.40:FF:000001">
    <property type="entry name" value="Trigger factor"/>
    <property type="match status" value="1"/>
</dbReference>
<dbReference type="Gene3D" id="3.10.50.40">
    <property type="match status" value="1"/>
</dbReference>
<dbReference type="Gene3D" id="3.30.70.1050">
    <property type="entry name" value="Trigger factor ribosome-binding domain"/>
    <property type="match status" value="1"/>
</dbReference>
<dbReference type="Gene3D" id="1.10.3120.10">
    <property type="entry name" value="Trigger factor, C-terminal domain"/>
    <property type="match status" value="1"/>
</dbReference>
<dbReference type="HAMAP" id="MF_00303">
    <property type="entry name" value="Trigger_factor_Tig"/>
    <property type="match status" value="1"/>
</dbReference>
<dbReference type="InterPro" id="IPR046357">
    <property type="entry name" value="PPIase_dom_sf"/>
</dbReference>
<dbReference type="InterPro" id="IPR001179">
    <property type="entry name" value="PPIase_FKBP_dom"/>
</dbReference>
<dbReference type="InterPro" id="IPR005215">
    <property type="entry name" value="Trig_fac"/>
</dbReference>
<dbReference type="InterPro" id="IPR008880">
    <property type="entry name" value="Trigger_fac_C"/>
</dbReference>
<dbReference type="InterPro" id="IPR037041">
    <property type="entry name" value="Trigger_fac_C_sf"/>
</dbReference>
<dbReference type="InterPro" id="IPR008881">
    <property type="entry name" value="Trigger_fac_ribosome-bd_bac"/>
</dbReference>
<dbReference type="InterPro" id="IPR036611">
    <property type="entry name" value="Trigger_fac_ribosome-bd_sf"/>
</dbReference>
<dbReference type="InterPro" id="IPR027304">
    <property type="entry name" value="Trigger_fact/SurA_dom_sf"/>
</dbReference>
<dbReference type="NCBIfam" id="TIGR00115">
    <property type="entry name" value="tig"/>
    <property type="match status" value="1"/>
</dbReference>
<dbReference type="PANTHER" id="PTHR30560">
    <property type="entry name" value="TRIGGER FACTOR CHAPERONE AND PEPTIDYL-PROLYL CIS/TRANS ISOMERASE"/>
    <property type="match status" value="1"/>
</dbReference>
<dbReference type="PANTHER" id="PTHR30560:SF3">
    <property type="entry name" value="TRIGGER FACTOR-LIKE PROTEIN TIG, CHLOROPLASTIC"/>
    <property type="match status" value="1"/>
</dbReference>
<dbReference type="Pfam" id="PF00254">
    <property type="entry name" value="FKBP_C"/>
    <property type="match status" value="1"/>
</dbReference>
<dbReference type="Pfam" id="PF05698">
    <property type="entry name" value="Trigger_C"/>
    <property type="match status" value="1"/>
</dbReference>
<dbReference type="Pfam" id="PF05697">
    <property type="entry name" value="Trigger_N"/>
    <property type="match status" value="1"/>
</dbReference>
<dbReference type="PIRSF" id="PIRSF003095">
    <property type="entry name" value="Trigger_factor"/>
    <property type="match status" value="1"/>
</dbReference>
<dbReference type="SUPFAM" id="SSF54534">
    <property type="entry name" value="FKBP-like"/>
    <property type="match status" value="1"/>
</dbReference>
<dbReference type="SUPFAM" id="SSF109998">
    <property type="entry name" value="Triger factor/SurA peptide-binding domain-like"/>
    <property type="match status" value="1"/>
</dbReference>
<dbReference type="SUPFAM" id="SSF102735">
    <property type="entry name" value="Trigger factor ribosome-binding domain"/>
    <property type="match status" value="1"/>
</dbReference>
<dbReference type="PROSITE" id="PS50059">
    <property type="entry name" value="FKBP_PPIASE"/>
    <property type="match status" value="1"/>
</dbReference>
<proteinExistence type="inferred from homology"/>
<name>TIG_CAMFF</name>
<reference key="1">
    <citation type="submission" date="2006-11" db="EMBL/GenBank/DDBJ databases">
        <title>Sequence of Campylobacter fetus subsp. fetus 82-40.</title>
        <authorList>
            <person name="Fouts D.E."/>
            <person name="Nelson K.E."/>
        </authorList>
    </citation>
    <scope>NUCLEOTIDE SEQUENCE [LARGE SCALE GENOMIC DNA]</scope>
    <source>
        <strain>82-40</strain>
    </source>
</reference>
<gene>
    <name evidence="1" type="primary">tig</name>
    <name type="ordered locus">CFF8240_1693</name>
</gene>
<sequence>MEVKAKLLNTANAAAQTEVKASELNAKVENLAKKAAKNIKIDGFRKGKVPVAQVLKRYGKDLENDAKSEIFRDIVNESLKLIAKKSSDIIGEPMILKFDEKDGNIDIELEISFKPEVKVDGYEEIIPEYTTPKVTKKEIEEKINEFLKMIAPLEKVEKESLEKGDFAKFDFEGFVDGEAFEGGKAEGYLLEIGSGQFIPGFEDGMLGLKVGEQKDVNVTFPAEYGAAHLAGKSAVFKVKLHEIQGKKAGKLDEETLKKLMPNEENPTAEQLEDRIKEQIRADKFQKLLNEDLKPKFADKAVEKFKFDLPNNIVEQEIDMQFRSAWGNFSEDEMKKFREDKEALKKQRETYKNEAIKSVQLTFIIDELAKQKGITVSDNELLQAVYFEAYRYGIDPKEHLESYKKQGMLPAVKMAMIEEKLFNNLFKSGNREDKGE</sequence>
<comment type="function">
    <text evidence="1">Involved in protein export. Acts as a chaperone by maintaining the newly synthesized protein in an open conformation. Functions as a peptidyl-prolyl cis-trans isomerase.</text>
</comment>
<comment type="catalytic activity">
    <reaction evidence="1">
        <text>[protein]-peptidylproline (omega=180) = [protein]-peptidylproline (omega=0)</text>
        <dbReference type="Rhea" id="RHEA:16237"/>
        <dbReference type="Rhea" id="RHEA-COMP:10747"/>
        <dbReference type="Rhea" id="RHEA-COMP:10748"/>
        <dbReference type="ChEBI" id="CHEBI:83833"/>
        <dbReference type="ChEBI" id="CHEBI:83834"/>
        <dbReference type="EC" id="5.2.1.8"/>
    </reaction>
</comment>
<comment type="subcellular location">
    <subcellularLocation>
        <location>Cytoplasm</location>
    </subcellularLocation>
    <text evidence="1">About half TF is bound to the ribosome near the polypeptide exit tunnel while the other half is free in the cytoplasm.</text>
</comment>
<comment type="domain">
    <text evidence="1">Consists of 3 domains; the N-terminus binds the ribosome, the middle domain has PPIase activity, while the C-terminus has intrinsic chaperone activity on its own.</text>
</comment>
<comment type="similarity">
    <text evidence="1">Belongs to the FKBP-type PPIase family. Tig subfamily.</text>
</comment>
<evidence type="ECO:0000255" key="1">
    <source>
        <dbReference type="HAMAP-Rule" id="MF_00303"/>
    </source>
</evidence>